<comment type="function">
    <text evidence="3">Down-regulates of the TCR/CD3E complex and the transferrin receptor TFRC in host T-cells by blocking them from recycling back to the cell surface.</text>
</comment>
<comment type="subunit">
    <text evidence="1 4">Interacts with host ITCH; this interaction probably mediates ITCH degradation (By similarity). Interacts probably with NEDD4 (PubMed:28051106).</text>
</comment>
<comment type="subcellular location">
    <subcellularLocation>
        <location evidence="1">Membrane</location>
        <topology evidence="5">Single-pass membrane protein</topology>
    </subcellularLocation>
</comment>
<comment type="domain">
    <text evidence="1">Late-budding domains (L domains) are short sequence motifs essential for viral particle budding. They recruit proteins of the host ESCRT machinery (Endosomal Sorting Complex Required for Transport) or ESCRT-associated proteins. Contains one L domain: a PPXY motif which is involved in the interaction with Itch, a member of the Nedd4 family.</text>
</comment>
<organismHost>
    <name type="scientific">Homo sapiens</name>
    <name type="common">Human</name>
    <dbReference type="NCBI Taxonomy" id="9606"/>
</organismHost>
<dbReference type="EMBL" id="U43400">
    <property type="protein sequence ID" value="AAC54685.1"/>
    <property type="molecule type" value="Genomic_DNA"/>
</dbReference>
<dbReference type="PIR" id="T41925">
    <property type="entry name" value="T41925"/>
</dbReference>
<dbReference type="RefSeq" id="YP_073763.1">
    <property type="nucleotide sequence ID" value="NC_001716.2"/>
</dbReference>
<dbReference type="SMR" id="Q69505"/>
<dbReference type="DNASU" id="3289481"/>
<dbReference type="GeneID" id="3289481"/>
<dbReference type="KEGG" id="vg:3289481"/>
<dbReference type="Proteomes" id="UP000009246">
    <property type="component" value="Segment"/>
</dbReference>
<dbReference type="GO" id="GO:0016020">
    <property type="term" value="C:membrane"/>
    <property type="evidence" value="ECO:0007669"/>
    <property type="project" value="UniProtKB-SubCell"/>
</dbReference>
<protein>
    <recommendedName>
        <fullName>U24 protein</fullName>
    </recommendedName>
</protein>
<name>U24_HHV7J</name>
<accession>Q69505</accession>
<reference key="1">
    <citation type="journal article" date="1995" name="J. Virol.">
        <title>Identification and characterization of a cDNA derived from multiple splicing that encodes envelope glycoprotein gp105 of human herpesvirus 6.</title>
        <authorList>
            <person name="Pfeiffer B."/>
            <person name="Thomson B."/>
            <person name="Chandran B."/>
        </authorList>
    </citation>
    <scope>NUCLEOTIDE SEQUENCE [LARGE SCALE GENOMIC DNA]</scope>
</reference>
<reference key="2">
    <citation type="journal article" date="2010" name="J. Virol.">
        <title>The U24 protein from human herpesvirus 6 and 7 affects endocytic recycling.</title>
        <authorList>
            <person name="Sullivan B.M."/>
            <person name="Coscoy L."/>
        </authorList>
    </citation>
    <scope>FUNCTION</scope>
    <scope>MUTAGENESIS OF 6-PRO--PRO-8</scope>
    <source>
        <strain>RK</strain>
    </source>
</reference>
<reference key="3">
    <citation type="journal article" date="2017" name="Sci. Rep.">
        <title>U24 from Roseolovirus interacts strongly with Nedd4 WW Domains.</title>
        <authorList>
            <person name="Sang Y."/>
            <person name="Zhang R."/>
            <person name="Scott W.R."/>
            <person name="Creagh A.L."/>
            <person name="Haynes C.A."/>
            <person name="Straus S.K."/>
        </authorList>
    </citation>
    <scope>INTERACTION WITH NEDD4 WW DOMAINS</scope>
</reference>
<keyword id="KW-0472">Membrane</keyword>
<keyword id="KW-1185">Reference proteome</keyword>
<keyword id="KW-0812">Transmembrane</keyword>
<keyword id="KW-1133">Transmembrane helix</keyword>
<proteinExistence type="evidence at protein level"/>
<gene>
    <name evidence="6" type="primary">U24</name>
</gene>
<sequence>MTHETPPPSYNDVMLQMFHDHSVFLHQENLSPRTINSTSSSEIKNVRRRGTFIILACLIISVILCLILILHIFNVRYGGTKP</sequence>
<organism>
    <name type="scientific">Human herpesvirus 7 (strain JI)</name>
    <name type="common">HHV-7</name>
    <name type="synonym">Human T lymphotropic virus</name>
    <dbReference type="NCBI Taxonomy" id="57278"/>
    <lineage>
        <taxon>Viruses</taxon>
        <taxon>Duplodnaviria</taxon>
        <taxon>Heunggongvirae</taxon>
        <taxon>Peploviricota</taxon>
        <taxon>Herviviricetes</taxon>
        <taxon>Herpesvirales</taxon>
        <taxon>Orthoherpesviridae</taxon>
        <taxon>Betaherpesvirinae</taxon>
        <taxon>Roseolovirus</taxon>
        <taxon>Roseolovirus humanbeta7</taxon>
        <taxon>Human betaherpesvirus 7</taxon>
    </lineage>
</organism>
<evidence type="ECO:0000250" key="1">
    <source>
        <dbReference type="UniProtKB" id="Q69559"/>
    </source>
</evidence>
<evidence type="ECO:0000255" key="2"/>
<evidence type="ECO:0000269" key="3">
    <source>
    </source>
</evidence>
<evidence type="ECO:0000269" key="4">
    <source>
    </source>
</evidence>
<evidence type="ECO:0000305" key="5"/>
<evidence type="ECO:0000312" key="6">
    <source>
        <dbReference type="EMBL" id="AAC54685.1"/>
    </source>
</evidence>
<feature type="chain" id="PRO_0000448381" description="U24 protein">
    <location>
        <begin position="1"/>
        <end position="82"/>
    </location>
</feature>
<feature type="transmembrane region" description="Helical" evidence="2">
    <location>
        <begin position="52"/>
        <end position="72"/>
    </location>
</feature>
<feature type="short sequence motif" description="PPXY motif" evidence="1">
    <location>
        <begin position="7"/>
        <end position="10"/>
    </location>
</feature>
<feature type="mutagenesis site" description="Complete loss of the ability to down-regulate the TCR complex." evidence="3">
    <original>PPP</original>
    <variation>AAA</variation>
    <location>
        <begin position="6"/>
        <end position="8"/>
    </location>
</feature>